<name>RF1_BIFA0</name>
<keyword id="KW-0963">Cytoplasm</keyword>
<keyword id="KW-0488">Methylation</keyword>
<keyword id="KW-0648">Protein biosynthesis</keyword>
<keyword id="KW-1185">Reference proteome</keyword>
<gene>
    <name evidence="1" type="primary">prfA</name>
    <name type="ordered locus">BLA_1055</name>
</gene>
<feature type="chain" id="PRO_1000193470" description="Peptide chain release factor 1">
    <location>
        <begin position="1"/>
        <end position="365"/>
    </location>
</feature>
<feature type="modified residue" description="N5-methylglutamine" evidence="1">
    <location>
        <position position="240"/>
    </location>
</feature>
<evidence type="ECO:0000255" key="1">
    <source>
        <dbReference type="HAMAP-Rule" id="MF_00093"/>
    </source>
</evidence>
<protein>
    <recommendedName>
        <fullName evidence="1">Peptide chain release factor 1</fullName>
        <shortName evidence="1">RF-1</shortName>
    </recommendedName>
</protein>
<accession>B8DTL4</accession>
<dbReference type="EMBL" id="CP001213">
    <property type="protein sequence ID" value="ACL29343.1"/>
    <property type="molecule type" value="Genomic_DNA"/>
</dbReference>
<dbReference type="RefSeq" id="WP_004218748.1">
    <property type="nucleotide sequence ID" value="NC_011835.1"/>
</dbReference>
<dbReference type="SMR" id="B8DTL4"/>
<dbReference type="STRING" id="442563.BLA_1055"/>
<dbReference type="GeneID" id="29695660"/>
<dbReference type="KEGG" id="bla:BLA_1055"/>
<dbReference type="PATRIC" id="fig|442563.4.peg.1103"/>
<dbReference type="HOGENOM" id="CLU_036856_0_1_11"/>
<dbReference type="Proteomes" id="UP000002456">
    <property type="component" value="Chromosome"/>
</dbReference>
<dbReference type="GO" id="GO:0005737">
    <property type="term" value="C:cytoplasm"/>
    <property type="evidence" value="ECO:0007669"/>
    <property type="project" value="UniProtKB-SubCell"/>
</dbReference>
<dbReference type="GO" id="GO:0016149">
    <property type="term" value="F:translation release factor activity, codon specific"/>
    <property type="evidence" value="ECO:0007669"/>
    <property type="project" value="UniProtKB-UniRule"/>
</dbReference>
<dbReference type="FunFam" id="3.30.160.20:FF:000004">
    <property type="entry name" value="Peptide chain release factor 1"/>
    <property type="match status" value="1"/>
</dbReference>
<dbReference type="Gene3D" id="3.30.160.20">
    <property type="match status" value="1"/>
</dbReference>
<dbReference type="Gene3D" id="3.30.70.1660">
    <property type="match status" value="1"/>
</dbReference>
<dbReference type="Gene3D" id="6.10.140.1950">
    <property type="match status" value="1"/>
</dbReference>
<dbReference type="HAMAP" id="MF_00093">
    <property type="entry name" value="Rel_fac_1"/>
    <property type="match status" value="1"/>
</dbReference>
<dbReference type="InterPro" id="IPR005139">
    <property type="entry name" value="PCRF"/>
</dbReference>
<dbReference type="InterPro" id="IPR000352">
    <property type="entry name" value="Pep_chain_release_fac_I"/>
</dbReference>
<dbReference type="InterPro" id="IPR045853">
    <property type="entry name" value="Pep_chain_release_fac_I_sf"/>
</dbReference>
<dbReference type="InterPro" id="IPR050057">
    <property type="entry name" value="Prokaryotic/Mito_RF"/>
</dbReference>
<dbReference type="InterPro" id="IPR004373">
    <property type="entry name" value="RF-1"/>
</dbReference>
<dbReference type="NCBIfam" id="TIGR00019">
    <property type="entry name" value="prfA"/>
    <property type="match status" value="1"/>
</dbReference>
<dbReference type="NCBIfam" id="NF001859">
    <property type="entry name" value="PRK00591.1"/>
    <property type="match status" value="1"/>
</dbReference>
<dbReference type="PANTHER" id="PTHR43804">
    <property type="entry name" value="LD18447P"/>
    <property type="match status" value="1"/>
</dbReference>
<dbReference type="PANTHER" id="PTHR43804:SF7">
    <property type="entry name" value="LD18447P"/>
    <property type="match status" value="1"/>
</dbReference>
<dbReference type="Pfam" id="PF03462">
    <property type="entry name" value="PCRF"/>
    <property type="match status" value="1"/>
</dbReference>
<dbReference type="Pfam" id="PF00472">
    <property type="entry name" value="RF-1"/>
    <property type="match status" value="1"/>
</dbReference>
<dbReference type="SMART" id="SM00937">
    <property type="entry name" value="PCRF"/>
    <property type="match status" value="1"/>
</dbReference>
<dbReference type="SUPFAM" id="SSF75620">
    <property type="entry name" value="Release factor"/>
    <property type="match status" value="1"/>
</dbReference>
<comment type="function">
    <text evidence="1">Peptide chain release factor 1 directs the termination of translation in response to the peptide chain termination codons UAG and UAA.</text>
</comment>
<comment type="subcellular location">
    <subcellularLocation>
        <location evidence="1">Cytoplasm</location>
    </subcellularLocation>
</comment>
<comment type="PTM">
    <text evidence="1">Methylated by PrmC. Methylation increases the termination efficiency of RF1.</text>
</comment>
<comment type="similarity">
    <text evidence="1">Belongs to the prokaryotic/mitochondrial release factor family.</text>
</comment>
<proteinExistence type="inferred from homology"/>
<reference key="1">
    <citation type="journal article" date="2009" name="J. Bacteriol.">
        <title>Genome sequence of the probiotic bacterium Bifidobacterium animalis subsp. lactis AD011.</title>
        <authorList>
            <person name="Kim J.F."/>
            <person name="Jeong H."/>
            <person name="Yu D.S."/>
            <person name="Choi S.-H."/>
            <person name="Hur C.-G."/>
            <person name="Park M.-S."/>
            <person name="Yoon S.H."/>
            <person name="Kim D.-W."/>
            <person name="Ji G.E."/>
            <person name="Park H.-S."/>
            <person name="Oh T.K."/>
        </authorList>
    </citation>
    <scope>NUCLEOTIDE SEQUENCE [LARGE SCALE GENOMIC DNA]</scope>
    <source>
        <strain>AD011</strain>
    </source>
</reference>
<organism>
    <name type="scientific">Bifidobacterium animalis subsp. lactis (strain AD011)</name>
    <dbReference type="NCBI Taxonomy" id="442563"/>
    <lineage>
        <taxon>Bacteria</taxon>
        <taxon>Bacillati</taxon>
        <taxon>Actinomycetota</taxon>
        <taxon>Actinomycetes</taxon>
        <taxon>Bifidobacteriales</taxon>
        <taxon>Bifidobacteriaceae</taxon>
        <taxon>Bifidobacterium</taxon>
    </lineage>
</organism>
<sequence>MASEEFPAAKTALEEYENIERQMGEQEVWSNPDKMRKLGRRQAQLGTIVNAYRTWLNIRNDLDAAQEMAGEDPDFAQEAKRLESELPEAEEKLRTALIPRDPDDARDVIMEIKAGAGGEEAALFAGDLLRMYMRYAEKRGWGVTIQSENSTELGGVKDVQMAIRAKGNPSPEEGVWASLKYEGGVHRVQRIPVTESQGRIQTSAAGVIVFPEADEDDDEIEIDPKDLKIDIFMSSGPGGQSVNTTYSAVRMTHIPTGIVVSMQDEKSQIQNRAAALRVLKSRLLAMKHEQEAAEAADMRHSQVRSLDRSERIRTYNFPENRIVDHRTNYKAYNLDAVLDGDLQAVIDSDIQADEEQRLASQQQQQ</sequence>